<keyword id="KW-0687">Ribonucleoprotein</keyword>
<keyword id="KW-0689">Ribosomal protein</keyword>
<gene>
    <name evidence="1" type="primary">rpmG</name>
    <name evidence="1" type="synonym">rpl33</name>
    <name type="ordered locus">PMT9312_0931</name>
</gene>
<feature type="chain" id="PRO_0000356612" description="Large ribosomal subunit protein bL33">
    <location>
        <begin position="1"/>
        <end position="64"/>
    </location>
</feature>
<feature type="region of interest" description="Disordered" evidence="2">
    <location>
        <begin position="19"/>
        <end position="40"/>
    </location>
</feature>
<evidence type="ECO:0000255" key="1">
    <source>
        <dbReference type="HAMAP-Rule" id="MF_00294"/>
    </source>
</evidence>
<evidence type="ECO:0000256" key="2">
    <source>
        <dbReference type="SAM" id="MobiDB-lite"/>
    </source>
</evidence>
<evidence type="ECO:0000305" key="3"/>
<dbReference type="EMBL" id="CP000111">
    <property type="protein sequence ID" value="ABB49991.1"/>
    <property type="status" value="ALT_INIT"/>
    <property type="molecule type" value="Genomic_DNA"/>
</dbReference>
<dbReference type="RefSeq" id="WP_002805540.1">
    <property type="nucleotide sequence ID" value="NC_007577.1"/>
</dbReference>
<dbReference type="SMR" id="Q31AV4"/>
<dbReference type="STRING" id="74546.PMT9312_0931"/>
<dbReference type="KEGG" id="pmi:PMT9312_0931"/>
<dbReference type="eggNOG" id="COG0267">
    <property type="taxonomic scope" value="Bacteria"/>
</dbReference>
<dbReference type="HOGENOM" id="CLU_190949_3_0_3"/>
<dbReference type="OrthoDB" id="9801333at2"/>
<dbReference type="Proteomes" id="UP000002715">
    <property type="component" value="Chromosome"/>
</dbReference>
<dbReference type="GO" id="GO:0005737">
    <property type="term" value="C:cytoplasm"/>
    <property type="evidence" value="ECO:0007669"/>
    <property type="project" value="UniProtKB-ARBA"/>
</dbReference>
<dbReference type="GO" id="GO:1990904">
    <property type="term" value="C:ribonucleoprotein complex"/>
    <property type="evidence" value="ECO:0007669"/>
    <property type="project" value="UniProtKB-KW"/>
</dbReference>
<dbReference type="GO" id="GO:0005840">
    <property type="term" value="C:ribosome"/>
    <property type="evidence" value="ECO:0007669"/>
    <property type="project" value="UniProtKB-KW"/>
</dbReference>
<dbReference type="GO" id="GO:0003735">
    <property type="term" value="F:structural constituent of ribosome"/>
    <property type="evidence" value="ECO:0007669"/>
    <property type="project" value="InterPro"/>
</dbReference>
<dbReference type="GO" id="GO:0006412">
    <property type="term" value="P:translation"/>
    <property type="evidence" value="ECO:0007669"/>
    <property type="project" value="UniProtKB-UniRule"/>
</dbReference>
<dbReference type="Gene3D" id="2.20.28.120">
    <property type="entry name" value="Ribosomal protein L33"/>
    <property type="match status" value="1"/>
</dbReference>
<dbReference type="HAMAP" id="MF_00294">
    <property type="entry name" value="Ribosomal_bL33"/>
    <property type="match status" value="1"/>
</dbReference>
<dbReference type="InterPro" id="IPR001705">
    <property type="entry name" value="Ribosomal_bL33"/>
</dbReference>
<dbReference type="InterPro" id="IPR038584">
    <property type="entry name" value="Ribosomal_bL33_sf"/>
</dbReference>
<dbReference type="InterPro" id="IPR011332">
    <property type="entry name" value="Ribosomal_zn-bd"/>
</dbReference>
<dbReference type="NCBIfam" id="NF001764">
    <property type="entry name" value="PRK00504.1"/>
    <property type="match status" value="1"/>
</dbReference>
<dbReference type="NCBIfam" id="NF001860">
    <property type="entry name" value="PRK00595.1"/>
    <property type="match status" value="1"/>
</dbReference>
<dbReference type="NCBIfam" id="TIGR01023">
    <property type="entry name" value="rpmG_bact"/>
    <property type="match status" value="1"/>
</dbReference>
<dbReference type="PANTHER" id="PTHR43168">
    <property type="entry name" value="50S RIBOSOMAL PROTEIN L33, CHLOROPLASTIC"/>
    <property type="match status" value="1"/>
</dbReference>
<dbReference type="PANTHER" id="PTHR43168:SF2">
    <property type="entry name" value="LARGE RIBOSOMAL SUBUNIT PROTEIN BL33C"/>
    <property type="match status" value="1"/>
</dbReference>
<dbReference type="Pfam" id="PF00471">
    <property type="entry name" value="Ribosomal_L33"/>
    <property type="match status" value="1"/>
</dbReference>
<dbReference type="SUPFAM" id="SSF57829">
    <property type="entry name" value="Zn-binding ribosomal proteins"/>
    <property type="match status" value="1"/>
</dbReference>
<comment type="similarity">
    <text evidence="1">Belongs to the bacterial ribosomal protein bL33 family.</text>
</comment>
<comment type="sequence caution" evidence="3">
    <conflict type="erroneous initiation">
        <sequence resource="EMBL-CDS" id="ABB49991"/>
    </conflict>
</comment>
<proteinExistence type="inferred from homology"/>
<reference key="1">
    <citation type="journal article" date="2006" name="Science">
        <title>Genomic islands and the ecology and evolution of Prochlorococcus.</title>
        <authorList>
            <person name="Coleman M.L."/>
            <person name="Sullivan M.B."/>
            <person name="Martiny A.C."/>
            <person name="Steglich C."/>
            <person name="Barry K."/>
            <person name="Delong E.F."/>
            <person name="Chisholm S.W."/>
        </authorList>
    </citation>
    <scope>NUCLEOTIDE SEQUENCE [LARGE SCALE GENOMIC DNA]</scope>
    <source>
        <strain>MIT 9312</strain>
    </source>
</reference>
<sequence>MAKKGTRVVVTLECTEARTSTDPKRSNGVSRYTTEKNRRNTTERLELKKFNPHLNRMTIHKEIK</sequence>
<accession>Q31AV4</accession>
<organism>
    <name type="scientific">Prochlorococcus marinus (strain MIT 9312)</name>
    <dbReference type="NCBI Taxonomy" id="74546"/>
    <lineage>
        <taxon>Bacteria</taxon>
        <taxon>Bacillati</taxon>
        <taxon>Cyanobacteriota</taxon>
        <taxon>Cyanophyceae</taxon>
        <taxon>Synechococcales</taxon>
        <taxon>Prochlorococcaceae</taxon>
        <taxon>Prochlorococcus</taxon>
    </lineage>
</organism>
<protein>
    <recommendedName>
        <fullName evidence="1">Large ribosomal subunit protein bL33</fullName>
    </recommendedName>
    <alternativeName>
        <fullName evidence="3">50S ribosomal protein L33</fullName>
    </alternativeName>
</protein>
<name>RL33_PROM9</name>